<evidence type="ECO:0000255" key="1">
    <source>
        <dbReference type="HAMAP-Rule" id="MF_01306"/>
    </source>
</evidence>
<evidence type="ECO:0000305" key="2"/>
<feature type="chain" id="PRO_0000132500" description="Small ribosomal subunit protein uS4">
    <location>
        <begin position="1"/>
        <end position="206"/>
    </location>
</feature>
<feature type="domain" description="S4 RNA-binding" evidence="1">
    <location>
        <begin position="96"/>
        <end position="156"/>
    </location>
</feature>
<comment type="function">
    <text evidence="1">One of the primary rRNA binding proteins, it binds directly to 16S rRNA where it nucleates assembly of the body of the 30S subunit.</text>
</comment>
<comment type="function">
    <text evidence="1">With S5 and S12 plays an important role in translational accuracy.</text>
</comment>
<comment type="subunit">
    <text evidence="1">Part of the 30S ribosomal subunit. Contacts protein S5. The interaction surface between S4 and S5 is involved in control of translational fidelity.</text>
</comment>
<comment type="similarity">
    <text evidence="1">Belongs to the universal ribosomal protein uS4 family.</text>
</comment>
<sequence length="206" mass="23549">MARYLGPKLKLSRREGTDLFLKSGVRAIDTKCKIEQPPGQHGARKPRLSDYGVQLREKQKVRRIYGVLERQFRNYYKEAARLKGNTGANLLQLLEGRLDNVVYRMGFGATRAESRQLVSHKAIMVNGRVVNIASYQVSPNDVVSIREKAKKQSRVKAALELAEQREKPTWLEVDAVKMEGVFKRIPERTDLSADINEHLIVELYSK</sequence>
<reference key="1">
    <citation type="journal article" date="2001" name="Nature">
        <title>Genome sequence of Yersinia pestis, the causative agent of plague.</title>
        <authorList>
            <person name="Parkhill J."/>
            <person name="Wren B.W."/>
            <person name="Thomson N.R."/>
            <person name="Titball R.W."/>
            <person name="Holden M.T.G."/>
            <person name="Prentice M.B."/>
            <person name="Sebaihia M."/>
            <person name="James K.D."/>
            <person name="Churcher C.M."/>
            <person name="Mungall K.L."/>
            <person name="Baker S."/>
            <person name="Basham D."/>
            <person name="Bentley S.D."/>
            <person name="Brooks K."/>
            <person name="Cerdeno-Tarraga A.-M."/>
            <person name="Chillingworth T."/>
            <person name="Cronin A."/>
            <person name="Davies R.M."/>
            <person name="Davis P."/>
            <person name="Dougan G."/>
            <person name="Feltwell T."/>
            <person name="Hamlin N."/>
            <person name="Holroyd S."/>
            <person name="Jagels K."/>
            <person name="Karlyshev A.V."/>
            <person name="Leather S."/>
            <person name="Moule S."/>
            <person name="Oyston P.C.F."/>
            <person name="Quail M.A."/>
            <person name="Rutherford K.M."/>
            <person name="Simmonds M."/>
            <person name="Skelton J."/>
            <person name="Stevens K."/>
            <person name="Whitehead S."/>
            <person name="Barrell B.G."/>
        </authorList>
    </citation>
    <scope>NUCLEOTIDE SEQUENCE [LARGE SCALE GENOMIC DNA]</scope>
    <source>
        <strain>CO-92 / Biovar Orientalis</strain>
    </source>
</reference>
<reference key="2">
    <citation type="journal article" date="2002" name="J. Bacteriol.">
        <title>Genome sequence of Yersinia pestis KIM.</title>
        <authorList>
            <person name="Deng W."/>
            <person name="Burland V."/>
            <person name="Plunkett G. III"/>
            <person name="Boutin A."/>
            <person name="Mayhew G.F."/>
            <person name="Liss P."/>
            <person name="Perna N.T."/>
            <person name="Rose D.J."/>
            <person name="Mau B."/>
            <person name="Zhou S."/>
            <person name="Schwartz D.C."/>
            <person name="Fetherston J.D."/>
            <person name="Lindler L.E."/>
            <person name="Brubaker R.R."/>
            <person name="Plano G.V."/>
            <person name="Straley S.C."/>
            <person name="McDonough K.A."/>
            <person name="Nilles M.L."/>
            <person name="Matson J.S."/>
            <person name="Blattner F.R."/>
            <person name="Perry R.D."/>
        </authorList>
    </citation>
    <scope>NUCLEOTIDE SEQUENCE [LARGE SCALE GENOMIC DNA]</scope>
    <source>
        <strain>KIM10+ / Biovar Mediaevalis</strain>
    </source>
</reference>
<reference key="3">
    <citation type="journal article" date="2004" name="DNA Res.">
        <title>Complete genome sequence of Yersinia pestis strain 91001, an isolate avirulent to humans.</title>
        <authorList>
            <person name="Song Y."/>
            <person name="Tong Z."/>
            <person name="Wang J."/>
            <person name="Wang L."/>
            <person name="Guo Z."/>
            <person name="Han Y."/>
            <person name="Zhang J."/>
            <person name="Pei D."/>
            <person name="Zhou D."/>
            <person name="Qin H."/>
            <person name="Pang X."/>
            <person name="Han Y."/>
            <person name="Zhai J."/>
            <person name="Li M."/>
            <person name="Cui B."/>
            <person name="Qi Z."/>
            <person name="Jin L."/>
            <person name="Dai R."/>
            <person name="Chen F."/>
            <person name="Li S."/>
            <person name="Ye C."/>
            <person name="Du Z."/>
            <person name="Lin W."/>
            <person name="Wang J."/>
            <person name="Yu J."/>
            <person name="Yang H."/>
            <person name="Wang J."/>
            <person name="Huang P."/>
            <person name="Yang R."/>
        </authorList>
    </citation>
    <scope>NUCLEOTIDE SEQUENCE [LARGE SCALE GENOMIC DNA]</scope>
    <source>
        <strain>91001 / Biovar Mediaevalis</strain>
    </source>
</reference>
<organism>
    <name type="scientific">Yersinia pestis</name>
    <dbReference type="NCBI Taxonomy" id="632"/>
    <lineage>
        <taxon>Bacteria</taxon>
        <taxon>Pseudomonadati</taxon>
        <taxon>Pseudomonadota</taxon>
        <taxon>Gammaproteobacteria</taxon>
        <taxon>Enterobacterales</taxon>
        <taxon>Yersiniaceae</taxon>
        <taxon>Yersinia</taxon>
    </lineage>
</organism>
<proteinExistence type="inferred from homology"/>
<dbReference type="EMBL" id="AL590842">
    <property type="protein sequence ID" value="CAL18916.1"/>
    <property type="molecule type" value="Genomic_DNA"/>
</dbReference>
<dbReference type="EMBL" id="AE009952">
    <property type="protein sequence ID" value="AAM87558.1"/>
    <property type="molecule type" value="Genomic_DNA"/>
</dbReference>
<dbReference type="EMBL" id="AE017042">
    <property type="protein sequence ID" value="AAS60507.1"/>
    <property type="molecule type" value="Genomic_DNA"/>
</dbReference>
<dbReference type="PIR" id="AB0029">
    <property type="entry name" value="AB0029"/>
</dbReference>
<dbReference type="RefSeq" id="WP_002218949.1">
    <property type="nucleotide sequence ID" value="NZ_WUCM01000078.1"/>
</dbReference>
<dbReference type="RefSeq" id="YP_002345314.1">
    <property type="nucleotide sequence ID" value="NC_003143.1"/>
</dbReference>
<dbReference type="SMR" id="Q8ZJ88"/>
<dbReference type="STRING" id="214092.YPO0233"/>
<dbReference type="PaxDb" id="214092-YPO0233"/>
<dbReference type="DNASU" id="1148961"/>
<dbReference type="EnsemblBacteria" id="AAS60507">
    <property type="protein sequence ID" value="AAS60507"/>
    <property type="gene ID" value="YP_0231"/>
</dbReference>
<dbReference type="GeneID" id="97454255"/>
<dbReference type="KEGG" id="ype:YPO0233"/>
<dbReference type="KEGG" id="ypk:y4014"/>
<dbReference type="KEGG" id="ypm:YP_0231"/>
<dbReference type="PATRIC" id="fig|214092.21.peg.461"/>
<dbReference type="eggNOG" id="COG0522">
    <property type="taxonomic scope" value="Bacteria"/>
</dbReference>
<dbReference type="HOGENOM" id="CLU_092403_0_2_6"/>
<dbReference type="OMA" id="QLVVELY"/>
<dbReference type="OrthoDB" id="9803672at2"/>
<dbReference type="Proteomes" id="UP000000815">
    <property type="component" value="Chromosome"/>
</dbReference>
<dbReference type="Proteomes" id="UP000001019">
    <property type="component" value="Chromosome"/>
</dbReference>
<dbReference type="Proteomes" id="UP000002490">
    <property type="component" value="Chromosome"/>
</dbReference>
<dbReference type="GO" id="GO:0015935">
    <property type="term" value="C:small ribosomal subunit"/>
    <property type="evidence" value="ECO:0000318"/>
    <property type="project" value="GO_Central"/>
</dbReference>
<dbReference type="GO" id="GO:0019843">
    <property type="term" value="F:rRNA binding"/>
    <property type="evidence" value="ECO:0000318"/>
    <property type="project" value="GO_Central"/>
</dbReference>
<dbReference type="GO" id="GO:0003735">
    <property type="term" value="F:structural constituent of ribosome"/>
    <property type="evidence" value="ECO:0000318"/>
    <property type="project" value="GO_Central"/>
</dbReference>
<dbReference type="GO" id="GO:0042274">
    <property type="term" value="P:ribosomal small subunit biogenesis"/>
    <property type="evidence" value="ECO:0000318"/>
    <property type="project" value="GO_Central"/>
</dbReference>
<dbReference type="GO" id="GO:0006412">
    <property type="term" value="P:translation"/>
    <property type="evidence" value="ECO:0007669"/>
    <property type="project" value="UniProtKB-UniRule"/>
</dbReference>
<dbReference type="CDD" id="cd00165">
    <property type="entry name" value="S4"/>
    <property type="match status" value="1"/>
</dbReference>
<dbReference type="FunFam" id="1.10.1050.10:FF:000001">
    <property type="entry name" value="30S ribosomal protein S4"/>
    <property type="match status" value="1"/>
</dbReference>
<dbReference type="FunFam" id="3.10.290.10:FF:000001">
    <property type="entry name" value="30S ribosomal protein S4"/>
    <property type="match status" value="1"/>
</dbReference>
<dbReference type="Gene3D" id="1.10.1050.10">
    <property type="entry name" value="Ribosomal Protein S4 Delta 41, Chain A, domain 1"/>
    <property type="match status" value="1"/>
</dbReference>
<dbReference type="Gene3D" id="3.10.290.10">
    <property type="entry name" value="RNA-binding S4 domain"/>
    <property type="match status" value="1"/>
</dbReference>
<dbReference type="HAMAP" id="MF_01306_B">
    <property type="entry name" value="Ribosomal_uS4_B"/>
    <property type="match status" value="1"/>
</dbReference>
<dbReference type="InterPro" id="IPR022801">
    <property type="entry name" value="Ribosomal_uS4"/>
</dbReference>
<dbReference type="InterPro" id="IPR005709">
    <property type="entry name" value="Ribosomal_uS4_bac-type"/>
</dbReference>
<dbReference type="InterPro" id="IPR018079">
    <property type="entry name" value="Ribosomal_uS4_CS"/>
</dbReference>
<dbReference type="InterPro" id="IPR001912">
    <property type="entry name" value="Ribosomal_uS4_N"/>
</dbReference>
<dbReference type="InterPro" id="IPR002942">
    <property type="entry name" value="S4_RNA-bd"/>
</dbReference>
<dbReference type="InterPro" id="IPR036986">
    <property type="entry name" value="S4_RNA-bd_sf"/>
</dbReference>
<dbReference type="NCBIfam" id="NF003717">
    <property type="entry name" value="PRK05327.1"/>
    <property type="match status" value="1"/>
</dbReference>
<dbReference type="NCBIfam" id="TIGR01017">
    <property type="entry name" value="rpsD_bact"/>
    <property type="match status" value="1"/>
</dbReference>
<dbReference type="PANTHER" id="PTHR11831">
    <property type="entry name" value="30S 40S RIBOSOMAL PROTEIN"/>
    <property type="match status" value="1"/>
</dbReference>
<dbReference type="PANTHER" id="PTHR11831:SF4">
    <property type="entry name" value="SMALL RIBOSOMAL SUBUNIT PROTEIN US4M"/>
    <property type="match status" value="1"/>
</dbReference>
<dbReference type="Pfam" id="PF00163">
    <property type="entry name" value="Ribosomal_S4"/>
    <property type="match status" value="1"/>
</dbReference>
<dbReference type="Pfam" id="PF01479">
    <property type="entry name" value="S4"/>
    <property type="match status" value="1"/>
</dbReference>
<dbReference type="SMART" id="SM01390">
    <property type="entry name" value="Ribosomal_S4"/>
    <property type="match status" value="1"/>
</dbReference>
<dbReference type="SMART" id="SM00363">
    <property type="entry name" value="S4"/>
    <property type="match status" value="1"/>
</dbReference>
<dbReference type="SUPFAM" id="SSF55174">
    <property type="entry name" value="Alpha-L RNA-binding motif"/>
    <property type="match status" value="1"/>
</dbReference>
<dbReference type="PROSITE" id="PS00632">
    <property type="entry name" value="RIBOSOMAL_S4"/>
    <property type="match status" value="1"/>
</dbReference>
<dbReference type="PROSITE" id="PS50889">
    <property type="entry name" value="S4"/>
    <property type="match status" value="1"/>
</dbReference>
<protein>
    <recommendedName>
        <fullName evidence="1">Small ribosomal subunit protein uS4</fullName>
    </recommendedName>
    <alternativeName>
        <fullName evidence="2">30S ribosomal protein S4</fullName>
    </alternativeName>
</protein>
<gene>
    <name evidence="1" type="primary">rpsD</name>
    <name type="ordered locus">YPO0233</name>
    <name type="ordered locus">y4014</name>
    <name type="ordered locus">YP_0231</name>
</gene>
<accession>Q8ZJ88</accession>
<accession>Q0WK74</accession>
<name>RS4_YERPE</name>
<keyword id="KW-1185">Reference proteome</keyword>
<keyword id="KW-0687">Ribonucleoprotein</keyword>
<keyword id="KW-0689">Ribosomal protein</keyword>
<keyword id="KW-0694">RNA-binding</keyword>
<keyword id="KW-0699">rRNA-binding</keyword>